<name>HFW2_DROME</name>
<evidence type="ECO:0000250" key="1">
    <source>
        <dbReference type="UniProtKB" id="Q9W568"/>
    </source>
</evidence>
<evidence type="ECO:0000255" key="2"/>
<evidence type="ECO:0000269" key="3">
    <source>
    </source>
</evidence>
<evidence type="ECO:0000269" key="4">
    <source>
    </source>
</evidence>
<evidence type="ECO:0000305" key="5"/>
<evidence type="ECO:0000312" key="6">
    <source>
        <dbReference type="EMBL" id="AAF57813.3"/>
    </source>
</evidence>
<evidence type="ECO:0000312" key="7">
    <source>
        <dbReference type="EMBL" id="AAL89887.1"/>
    </source>
</evidence>
<evidence type="ECO:0000312" key="8">
    <source>
        <dbReference type="FlyBase" id="FBgn0034262"/>
    </source>
</evidence>
<dbReference type="EMBL" id="AE013599">
    <property type="protein sequence ID" value="AAF57813.3"/>
    <property type="molecule type" value="Genomic_DNA"/>
</dbReference>
<dbReference type="EMBL" id="AY084149">
    <property type="protein sequence ID" value="AAL89887.1"/>
    <property type="molecule type" value="mRNA"/>
</dbReference>
<dbReference type="RefSeq" id="NP_611247.3">
    <property type="nucleotide sequence ID" value="NM_137403.4"/>
</dbReference>
<dbReference type="SMR" id="Q8SXT3"/>
<dbReference type="BioGRID" id="62696">
    <property type="interactions" value="1"/>
</dbReference>
<dbReference type="FunCoup" id="Q8SXT3">
    <property type="interactions" value="29"/>
</dbReference>
<dbReference type="STRING" id="7227.FBpp0086049"/>
<dbReference type="PaxDb" id="7227-FBpp0086049"/>
<dbReference type="DNASU" id="37010"/>
<dbReference type="EnsemblMetazoa" id="FBtr0086889">
    <property type="protein sequence ID" value="FBpp0086049"/>
    <property type="gene ID" value="FBgn0034262"/>
</dbReference>
<dbReference type="GeneID" id="37010"/>
<dbReference type="KEGG" id="dme:Dmel_CG14485"/>
<dbReference type="UCSC" id="CG14485-RA">
    <property type="organism name" value="d. melanogaster"/>
</dbReference>
<dbReference type="AGR" id="FB:FBgn0034262"/>
<dbReference type="CTD" id="37010"/>
<dbReference type="FlyBase" id="FBgn0034262">
    <property type="gene designation" value="swi2"/>
</dbReference>
<dbReference type="VEuPathDB" id="VectorBase:FBgn0034262"/>
<dbReference type="eggNOG" id="KOG0619">
    <property type="taxonomic scope" value="Eukaryota"/>
</dbReference>
<dbReference type="HOGENOM" id="CLU_028059_0_0_1"/>
<dbReference type="InParanoid" id="Q8SXT3"/>
<dbReference type="OMA" id="RNPWHCT"/>
<dbReference type="OrthoDB" id="6343311at2759"/>
<dbReference type="PhylomeDB" id="Q8SXT3"/>
<dbReference type="Reactome" id="R-DME-388844">
    <property type="pathway name" value="Receptor-type tyrosine-protein phosphatases"/>
</dbReference>
<dbReference type="BioGRID-ORCS" id="37010">
    <property type="hits" value="0 hits in 1 CRISPR screen"/>
</dbReference>
<dbReference type="GenomeRNAi" id="37010"/>
<dbReference type="PRO" id="PR:Q8SXT3"/>
<dbReference type="Proteomes" id="UP000000803">
    <property type="component" value="Chromosome 2R"/>
</dbReference>
<dbReference type="Bgee" id="FBgn0034262">
    <property type="expression patterns" value="Expressed in adult Malpighian tubule principal cell of initial segment in Malpighian tubule and 68 other cell types or tissues"/>
</dbReference>
<dbReference type="ExpressionAtlas" id="Q8SXT3">
    <property type="expression patterns" value="baseline and differential"/>
</dbReference>
<dbReference type="GO" id="GO:0005886">
    <property type="term" value="C:plasma membrane"/>
    <property type="evidence" value="ECO:0000318"/>
    <property type="project" value="GO_Central"/>
</dbReference>
<dbReference type="GO" id="GO:0035556">
    <property type="term" value="P:intracellular signal transduction"/>
    <property type="evidence" value="ECO:0000250"/>
    <property type="project" value="UniProtKB"/>
</dbReference>
<dbReference type="GO" id="GO:0035073">
    <property type="term" value="P:pupariation"/>
    <property type="evidence" value="ECO:0000250"/>
    <property type="project" value="UniProtKB"/>
</dbReference>
<dbReference type="GO" id="GO:0035075">
    <property type="term" value="P:response to ecdysone"/>
    <property type="evidence" value="ECO:0000250"/>
    <property type="project" value="UniProtKB"/>
</dbReference>
<dbReference type="FunFam" id="3.80.10.10:FF:001064">
    <property type="entry name" value="Protein singed wings 2"/>
    <property type="match status" value="1"/>
</dbReference>
<dbReference type="FunFam" id="3.80.10.10:FF:001067">
    <property type="entry name" value="Protein singed wings 2"/>
    <property type="match status" value="1"/>
</dbReference>
<dbReference type="Gene3D" id="3.80.10.10">
    <property type="entry name" value="Ribonuclease Inhibitor"/>
    <property type="match status" value="2"/>
</dbReference>
<dbReference type="InterPro" id="IPR032675">
    <property type="entry name" value="LRR_dom_sf"/>
</dbReference>
<dbReference type="InterPro" id="IPR050541">
    <property type="entry name" value="LRR_TM_domain-containing"/>
</dbReference>
<dbReference type="PANTHER" id="PTHR24369">
    <property type="entry name" value="ANTIGEN BSP, PUTATIVE-RELATED"/>
    <property type="match status" value="1"/>
</dbReference>
<dbReference type="PANTHER" id="PTHR24369:SF210">
    <property type="entry name" value="CHAOPTIN-RELATED"/>
    <property type="match status" value="1"/>
</dbReference>
<dbReference type="SUPFAM" id="SSF52058">
    <property type="entry name" value="L domain-like"/>
    <property type="match status" value="2"/>
</dbReference>
<gene>
    <name evidence="8" type="primary">swi2</name>
    <name type="ORF">CG14485</name>
</gene>
<sequence>MPSGVFQKRPKAAETISLFCMILIRLSRAADDSHETSTLLATITTITTEIIPMPDSGRSCFGWSSAPEAAGGNCSRSNRNGTLKCYGGMNNLAALNQSGKLSRVQPALEMLLCGWPKDGLNHFRDLQKLPRLRSLTIEYSGFTEFKFDFPEMLELHTINISWTNLSYISSRTFKRVHPLKVLDLRWNQLIQLDGPLLLPRNFEQLYLAGNPWNCTRNFKWLLLQPEKGRLVVDRDELICTDRKYKERQMLMVMHYKLELKRQCQSHEDLRNCTCLMHHILPKTHIPLYTVNCSHLQFHRLPDFLPDNTTTLVINDNMISDINPLRDNPHYRHVVDMQLENNQISNVDNLEDTYWLQNFRLLNLRGNNLRKLHVYALDNALDDNENANLLLLSRNPWHCTCKFGSRMRELLTKYKDIVRDAWNVSCTYRLDDDQLLAKVLTLSRQEMCNLSVEGGTQIHPIDWLNGVLASLIFLILGKLAYDYYYYKYYGRVPWIVMKMP</sequence>
<comment type="function">
    <text evidence="1">Has a role in the ecdysone induced cascade; probably indirect control of 'late' ecdysone genes.</text>
</comment>
<protein>
    <recommendedName>
        <fullName>Protein singed wings 2</fullName>
    </recommendedName>
</protein>
<accession>Q8SXT3</accession>
<accession>Q9V863</accession>
<organism>
    <name type="scientific">Drosophila melanogaster</name>
    <name type="common">Fruit fly</name>
    <dbReference type="NCBI Taxonomy" id="7227"/>
    <lineage>
        <taxon>Eukaryota</taxon>
        <taxon>Metazoa</taxon>
        <taxon>Ecdysozoa</taxon>
        <taxon>Arthropoda</taxon>
        <taxon>Hexapoda</taxon>
        <taxon>Insecta</taxon>
        <taxon>Pterygota</taxon>
        <taxon>Neoptera</taxon>
        <taxon>Endopterygota</taxon>
        <taxon>Diptera</taxon>
        <taxon>Brachycera</taxon>
        <taxon>Muscomorpha</taxon>
        <taxon>Ephydroidea</taxon>
        <taxon>Drosophilidae</taxon>
        <taxon>Drosophila</taxon>
        <taxon>Sophophora</taxon>
    </lineage>
</organism>
<feature type="signal peptide" evidence="2">
    <location>
        <begin position="1"/>
        <end position="29"/>
    </location>
</feature>
<feature type="chain" id="PRO_0000021414" description="Protein singed wings 2">
    <location>
        <begin position="30"/>
        <end position="499"/>
    </location>
</feature>
<feature type="repeat" description="LRR 1">
    <location>
        <begin position="154"/>
        <end position="175"/>
    </location>
</feature>
<feature type="repeat" description="LRR 2">
    <location>
        <begin position="178"/>
        <end position="199"/>
    </location>
</feature>
<feature type="domain" description="LRRCT 1">
    <location>
        <begin position="210"/>
        <end position="265"/>
    </location>
</feature>
<feature type="repeat" description="LRR 3">
    <location>
        <begin position="307"/>
        <end position="328"/>
    </location>
</feature>
<feature type="repeat" description="LRR 4">
    <location>
        <begin position="332"/>
        <end position="353"/>
    </location>
</feature>
<feature type="repeat" description="LRR 5">
    <location>
        <begin position="357"/>
        <end position="378"/>
    </location>
</feature>
<feature type="domain" description="LRRCT 2">
    <location>
        <begin position="394"/>
        <end position="449"/>
    </location>
</feature>
<keyword id="KW-0433">Leucine-rich repeat</keyword>
<keyword id="KW-1185">Reference proteome</keyword>
<keyword id="KW-0677">Repeat</keyword>
<keyword id="KW-0732">Signal</keyword>
<proteinExistence type="evidence at transcript level"/>
<reference evidence="6" key="1">
    <citation type="journal article" date="2000" name="Science">
        <title>The genome sequence of Drosophila melanogaster.</title>
        <authorList>
            <person name="Adams M.D."/>
            <person name="Celniker S.E."/>
            <person name="Holt R.A."/>
            <person name="Evans C.A."/>
            <person name="Gocayne J.D."/>
            <person name="Amanatides P.G."/>
            <person name="Scherer S.E."/>
            <person name="Li P.W."/>
            <person name="Hoskins R.A."/>
            <person name="Galle R.F."/>
            <person name="George R.A."/>
            <person name="Lewis S.E."/>
            <person name="Richards S."/>
            <person name="Ashburner M."/>
            <person name="Henderson S.N."/>
            <person name="Sutton G.G."/>
            <person name="Wortman J.R."/>
            <person name="Yandell M.D."/>
            <person name="Zhang Q."/>
            <person name="Chen L.X."/>
            <person name="Brandon R.C."/>
            <person name="Rogers Y.-H.C."/>
            <person name="Blazej R.G."/>
            <person name="Champe M."/>
            <person name="Pfeiffer B.D."/>
            <person name="Wan K.H."/>
            <person name="Doyle C."/>
            <person name="Baxter E.G."/>
            <person name="Helt G."/>
            <person name="Nelson C.R."/>
            <person name="Miklos G.L.G."/>
            <person name="Abril J.F."/>
            <person name="Agbayani A."/>
            <person name="An H.-J."/>
            <person name="Andrews-Pfannkoch C."/>
            <person name="Baldwin D."/>
            <person name="Ballew R.M."/>
            <person name="Basu A."/>
            <person name="Baxendale J."/>
            <person name="Bayraktaroglu L."/>
            <person name="Beasley E.M."/>
            <person name="Beeson K.Y."/>
            <person name="Benos P.V."/>
            <person name="Berman B.P."/>
            <person name="Bhandari D."/>
            <person name="Bolshakov S."/>
            <person name="Borkova D."/>
            <person name="Botchan M.R."/>
            <person name="Bouck J."/>
            <person name="Brokstein P."/>
            <person name="Brottier P."/>
            <person name="Burtis K.C."/>
            <person name="Busam D.A."/>
            <person name="Butler H."/>
            <person name="Cadieu E."/>
            <person name="Center A."/>
            <person name="Chandra I."/>
            <person name="Cherry J.M."/>
            <person name="Cawley S."/>
            <person name="Dahlke C."/>
            <person name="Davenport L.B."/>
            <person name="Davies P."/>
            <person name="de Pablos B."/>
            <person name="Delcher A."/>
            <person name="Deng Z."/>
            <person name="Mays A.D."/>
            <person name="Dew I."/>
            <person name="Dietz S.M."/>
            <person name="Dodson K."/>
            <person name="Doup L.E."/>
            <person name="Downes M."/>
            <person name="Dugan-Rocha S."/>
            <person name="Dunkov B.C."/>
            <person name="Dunn P."/>
            <person name="Durbin K.J."/>
            <person name="Evangelista C.C."/>
            <person name="Ferraz C."/>
            <person name="Ferriera S."/>
            <person name="Fleischmann W."/>
            <person name="Fosler C."/>
            <person name="Gabrielian A.E."/>
            <person name="Garg N.S."/>
            <person name="Gelbart W.M."/>
            <person name="Glasser K."/>
            <person name="Glodek A."/>
            <person name="Gong F."/>
            <person name="Gorrell J.H."/>
            <person name="Gu Z."/>
            <person name="Guan P."/>
            <person name="Harris M."/>
            <person name="Harris N.L."/>
            <person name="Harvey D.A."/>
            <person name="Heiman T.J."/>
            <person name="Hernandez J.R."/>
            <person name="Houck J."/>
            <person name="Hostin D."/>
            <person name="Houston K.A."/>
            <person name="Howland T.J."/>
            <person name="Wei M.-H."/>
            <person name="Ibegwam C."/>
            <person name="Jalali M."/>
            <person name="Kalush F."/>
            <person name="Karpen G.H."/>
            <person name="Ke Z."/>
            <person name="Kennison J.A."/>
            <person name="Ketchum K.A."/>
            <person name="Kimmel B.E."/>
            <person name="Kodira C.D."/>
            <person name="Kraft C.L."/>
            <person name="Kravitz S."/>
            <person name="Kulp D."/>
            <person name="Lai Z."/>
            <person name="Lasko P."/>
            <person name="Lei Y."/>
            <person name="Levitsky A.A."/>
            <person name="Li J.H."/>
            <person name="Li Z."/>
            <person name="Liang Y."/>
            <person name="Lin X."/>
            <person name="Liu X."/>
            <person name="Mattei B."/>
            <person name="McIntosh T.C."/>
            <person name="McLeod M.P."/>
            <person name="McPherson D."/>
            <person name="Merkulov G."/>
            <person name="Milshina N.V."/>
            <person name="Mobarry C."/>
            <person name="Morris J."/>
            <person name="Moshrefi A."/>
            <person name="Mount S.M."/>
            <person name="Moy M."/>
            <person name="Murphy B."/>
            <person name="Murphy L."/>
            <person name="Muzny D.M."/>
            <person name="Nelson D.L."/>
            <person name="Nelson D.R."/>
            <person name="Nelson K.A."/>
            <person name="Nixon K."/>
            <person name="Nusskern D.R."/>
            <person name="Pacleb J.M."/>
            <person name="Palazzolo M."/>
            <person name="Pittman G.S."/>
            <person name="Pan S."/>
            <person name="Pollard J."/>
            <person name="Puri V."/>
            <person name="Reese M.G."/>
            <person name="Reinert K."/>
            <person name="Remington K."/>
            <person name="Saunders R.D.C."/>
            <person name="Scheeler F."/>
            <person name="Shen H."/>
            <person name="Shue B.C."/>
            <person name="Siden-Kiamos I."/>
            <person name="Simpson M."/>
            <person name="Skupski M.P."/>
            <person name="Smith T.J."/>
            <person name="Spier E."/>
            <person name="Spradling A.C."/>
            <person name="Stapleton M."/>
            <person name="Strong R."/>
            <person name="Sun E."/>
            <person name="Svirskas R."/>
            <person name="Tector C."/>
            <person name="Turner R."/>
            <person name="Venter E."/>
            <person name="Wang A.H."/>
            <person name="Wang X."/>
            <person name="Wang Z.-Y."/>
            <person name="Wassarman D.A."/>
            <person name="Weinstock G.M."/>
            <person name="Weissenbach J."/>
            <person name="Williams S.M."/>
            <person name="Woodage T."/>
            <person name="Worley K.C."/>
            <person name="Wu D."/>
            <person name="Yang S."/>
            <person name="Yao Q.A."/>
            <person name="Ye J."/>
            <person name="Yeh R.-F."/>
            <person name="Zaveri J.S."/>
            <person name="Zhan M."/>
            <person name="Zhang G."/>
            <person name="Zhao Q."/>
            <person name="Zheng L."/>
            <person name="Zheng X.H."/>
            <person name="Zhong F.N."/>
            <person name="Zhong W."/>
            <person name="Zhou X."/>
            <person name="Zhu S.C."/>
            <person name="Zhu X."/>
            <person name="Smith H.O."/>
            <person name="Gibbs R.A."/>
            <person name="Myers E.W."/>
            <person name="Rubin G.M."/>
            <person name="Venter J.C."/>
        </authorList>
    </citation>
    <scope>NUCLEOTIDE SEQUENCE [LARGE SCALE GENOMIC DNA]</scope>
    <source>
        <strain evidence="3">Berkeley</strain>
    </source>
</reference>
<reference evidence="5 6" key="2">
    <citation type="journal article" date="2002" name="Genome Biol.">
        <title>Annotation of the Drosophila melanogaster euchromatic genome: a systematic review.</title>
        <authorList>
            <person name="Misra S."/>
            <person name="Crosby M.A."/>
            <person name="Mungall C.J."/>
            <person name="Matthews B.B."/>
            <person name="Campbell K.S."/>
            <person name="Hradecky P."/>
            <person name="Huang Y."/>
            <person name="Kaminker J.S."/>
            <person name="Millburn G.H."/>
            <person name="Prochnik S.E."/>
            <person name="Smith C.D."/>
            <person name="Tupy J.L."/>
            <person name="Whitfield E.J."/>
            <person name="Bayraktaroglu L."/>
            <person name="Berman B.P."/>
            <person name="Bettencourt B.R."/>
            <person name="Celniker S.E."/>
            <person name="de Grey A.D.N.J."/>
            <person name="Drysdale R.A."/>
            <person name="Harris N.L."/>
            <person name="Richter J."/>
            <person name="Russo S."/>
            <person name="Schroeder A.J."/>
            <person name="Shu S.Q."/>
            <person name="Stapleton M."/>
            <person name="Yamada C."/>
            <person name="Ashburner M."/>
            <person name="Gelbart W.M."/>
            <person name="Rubin G.M."/>
            <person name="Lewis S.E."/>
        </authorList>
    </citation>
    <scope>GENOME REANNOTATION</scope>
    <source>
        <strain>Berkeley</strain>
    </source>
</reference>
<reference evidence="7" key="3">
    <citation type="journal article" date="2002" name="Genome Biol.">
        <title>A Drosophila full-length cDNA resource.</title>
        <authorList>
            <person name="Stapleton M."/>
            <person name="Carlson J.W."/>
            <person name="Brokstein P."/>
            <person name="Yu C."/>
            <person name="Champe M."/>
            <person name="George R.A."/>
            <person name="Guarin H."/>
            <person name="Kronmiller B."/>
            <person name="Pacleb J.M."/>
            <person name="Park S."/>
            <person name="Wan K.H."/>
            <person name="Rubin G.M."/>
            <person name="Celniker S.E."/>
        </authorList>
    </citation>
    <scope>NUCLEOTIDE SEQUENCE [LARGE SCALE MRNA]</scope>
    <source>
        <strain evidence="7">Berkeley</strain>
        <tissue evidence="4">Embryo</tissue>
    </source>
</reference>
<reference evidence="5" key="4">
    <citation type="journal article" date="2004" name="BMC Genet.">
        <title>Molecular characterization of the singed wings locus of Drosophila melanogaster.</title>
        <authorList>
            <person name="Schwartz Y.B."/>
            <person name="Boykova T."/>
            <person name="Belyaeva E.S."/>
            <person name="Ashburner M."/>
            <person name="Zhimulev I.F."/>
        </authorList>
    </citation>
    <scope>IDENTIFICATION</scope>
</reference>